<comment type="function">
    <text evidence="1">Transfers and isomerizes the ribose moiety from AdoMet to the 7-aminomethyl group of 7-deazaguanine (preQ1-tRNA) to give epoxyqueuosine (oQ-tRNA).</text>
</comment>
<comment type="catalytic activity">
    <reaction evidence="1">
        <text>7-aminomethyl-7-carbaguanosine(34) in tRNA + S-adenosyl-L-methionine = epoxyqueuosine(34) in tRNA + adenine + L-methionine + 2 H(+)</text>
        <dbReference type="Rhea" id="RHEA:32155"/>
        <dbReference type="Rhea" id="RHEA-COMP:10342"/>
        <dbReference type="Rhea" id="RHEA-COMP:18582"/>
        <dbReference type="ChEBI" id="CHEBI:15378"/>
        <dbReference type="ChEBI" id="CHEBI:16708"/>
        <dbReference type="ChEBI" id="CHEBI:57844"/>
        <dbReference type="ChEBI" id="CHEBI:59789"/>
        <dbReference type="ChEBI" id="CHEBI:82833"/>
        <dbReference type="ChEBI" id="CHEBI:194443"/>
        <dbReference type="EC" id="2.4.99.17"/>
    </reaction>
</comment>
<comment type="pathway">
    <text evidence="1">tRNA modification; tRNA-queuosine biosynthesis.</text>
</comment>
<comment type="subunit">
    <text evidence="1">Monomer.</text>
</comment>
<comment type="subcellular location">
    <subcellularLocation>
        <location evidence="1">Cytoplasm</location>
    </subcellularLocation>
</comment>
<comment type="similarity">
    <text evidence="1">Belongs to the QueA family.</text>
</comment>
<name>QUEA_OLEA2</name>
<evidence type="ECO:0000255" key="1">
    <source>
        <dbReference type="HAMAP-Rule" id="MF_00113"/>
    </source>
</evidence>
<evidence type="ECO:0000256" key="2">
    <source>
        <dbReference type="SAM" id="MobiDB-lite"/>
    </source>
</evidence>
<reference key="1">
    <citation type="journal article" date="2011" name="J. Bacteriol.">
        <title>Complete genome sequence and updated annotation of Desulfovibrio alaskensis G20.</title>
        <authorList>
            <person name="Hauser L.J."/>
            <person name="Land M.L."/>
            <person name="Brown S.D."/>
            <person name="Larimer F."/>
            <person name="Keller K.L."/>
            <person name="Rapp-Giles B.J."/>
            <person name="Price M.N."/>
            <person name="Lin M."/>
            <person name="Bruce D.C."/>
            <person name="Detter J.C."/>
            <person name="Tapia R."/>
            <person name="Han C.S."/>
            <person name="Goodwin L.A."/>
            <person name="Cheng J.F."/>
            <person name="Pitluck S."/>
            <person name="Copeland A."/>
            <person name="Lucas S."/>
            <person name="Nolan M."/>
            <person name="Lapidus A.L."/>
            <person name="Palumbo A.V."/>
            <person name="Wall J.D."/>
        </authorList>
    </citation>
    <scope>NUCLEOTIDE SEQUENCE [LARGE SCALE GENOMIC DNA]</scope>
    <source>
        <strain>ATCC BAA-1058 / DSM 17464 / G20</strain>
    </source>
</reference>
<proteinExistence type="inferred from homology"/>
<accession>Q317N3</accession>
<protein>
    <recommendedName>
        <fullName evidence="1">S-adenosylmethionine:tRNA ribosyltransferase-isomerase</fullName>
        <ecNumber evidence="1">2.4.99.17</ecNumber>
    </recommendedName>
    <alternativeName>
        <fullName evidence="1">Queuosine biosynthesis protein QueA</fullName>
    </alternativeName>
</protein>
<dbReference type="EC" id="2.4.99.17" evidence="1"/>
<dbReference type="EMBL" id="CP000112">
    <property type="protein sequence ID" value="ABB36843.1"/>
    <property type="molecule type" value="Genomic_DNA"/>
</dbReference>
<dbReference type="RefSeq" id="WP_011366234.1">
    <property type="nucleotide sequence ID" value="NC_007519.1"/>
</dbReference>
<dbReference type="SMR" id="Q317N3"/>
<dbReference type="STRING" id="207559.Dde_0042"/>
<dbReference type="KEGG" id="dde:Dde_0042"/>
<dbReference type="eggNOG" id="COG0809">
    <property type="taxonomic scope" value="Bacteria"/>
</dbReference>
<dbReference type="HOGENOM" id="CLU_039110_1_0_7"/>
<dbReference type="UniPathway" id="UPA00392"/>
<dbReference type="Proteomes" id="UP000002710">
    <property type="component" value="Chromosome"/>
</dbReference>
<dbReference type="GO" id="GO:0005737">
    <property type="term" value="C:cytoplasm"/>
    <property type="evidence" value="ECO:0007669"/>
    <property type="project" value="UniProtKB-SubCell"/>
</dbReference>
<dbReference type="GO" id="GO:0051075">
    <property type="term" value="F:S-adenosylmethionine:tRNA ribosyltransferase-isomerase activity"/>
    <property type="evidence" value="ECO:0007669"/>
    <property type="project" value="UniProtKB-EC"/>
</dbReference>
<dbReference type="GO" id="GO:0008616">
    <property type="term" value="P:queuosine biosynthetic process"/>
    <property type="evidence" value="ECO:0007669"/>
    <property type="project" value="UniProtKB-UniRule"/>
</dbReference>
<dbReference type="GO" id="GO:0002099">
    <property type="term" value="P:tRNA wobble guanine modification"/>
    <property type="evidence" value="ECO:0007669"/>
    <property type="project" value="TreeGrafter"/>
</dbReference>
<dbReference type="FunFam" id="3.40.1780.10:FF:000001">
    <property type="entry name" value="S-adenosylmethionine:tRNA ribosyltransferase-isomerase"/>
    <property type="match status" value="1"/>
</dbReference>
<dbReference type="Gene3D" id="2.40.10.240">
    <property type="entry name" value="QueA-like"/>
    <property type="match status" value="1"/>
</dbReference>
<dbReference type="Gene3D" id="3.40.1780.10">
    <property type="entry name" value="QueA-like"/>
    <property type="match status" value="2"/>
</dbReference>
<dbReference type="HAMAP" id="MF_00113">
    <property type="entry name" value="QueA"/>
    <property type="match status" value="1"/>
</dbReference>
<dbReference type="InterPro" id="IPR003699">
    <property type="entry name" value="QueA"/>
</dbReference>
<dbReference type="InterPro" id="IPR042118">
    <property type="entry name" value="QueA_dom1"/>
</dbReference>
<dbReference type="InterPro" id="IPR042119">
    <property type="entry name" value="QueA_dom2"/>
</dbReference>
<dbReference type="InterPro" id="IPR036100">
    <property type="entry name" value="QueA_sf"/>
</dbReference>
<dbReference type="NCBIfam" id="NF001140">
    <property type="entry name" value="PRK00147.1"/>
    <property type="match status" value="1"/>
</dbReference>
<dbReference type="NCBIfam" id="TIGR00113">
    <property type="entry name" value="queA"/>
    <property type="match status" value="1"/>
</dbReference>
<dbReference type="PANTHER" id="PTHR30307">
    <property type="entry name" value="S-ADENOSYLMETHIONINE:TRNA RIBOSYLTRANSFERASE-ISOMERASE"/>
    <property type="match status" value="1"/>
</dbReference>
<dbReference type="PANTHER" id="PTHR30307:SF0">
    <property type="entry name" value="S-ADENOSYLMETHIONINE:TRNA RIBOSYLTRANSFERASE-ISOMERASE"/>
    <property type="match status" value="1"/>
</dbReference>
<dbReference type="Pfam" id="PF02547">
    <property type="entry name" value="Queuosine_synth"/>
    <property type="match status" value="1"/>
</dbReference>
<dbReference type="SUPFAM" id="SSF111337">
    <property type="entry name" value="QueA-like"/>
    <property type="match status" value="1"/>
</dbReference>
<feature type="chain" id="PRO_0000231334" description="S-adenosylmethionine:tRNA ribosyltransferase-isomerase">
    <location>
        <begin position="1"/>
        <end position="380"/>
    </location>
</feature>
<feature type="region of interest" description="Disordered" evidence="2">
    <location>
        <begin position="1"/>
        <end position="24"/>
    </location>
</feature>
<feature type="compositionally biased region" description="Basic and acidic residues" evidence="2">
    <location>
        <begin position="1"/>
        <end position="15"/>
    </location>
</feature>
<organism>
    <name type="scientific">Oleidesulfovibrio alaskensis (strain ATCC BAA-1058 / DSM 17464 / G20)</name>
    <name type="common">Desulfovibrio alaskensis</name>
    <dbReference type="NCBI Taxonomy" id="207559"/>
    <lineage>
        <taxon>Bacteria</taxon>
        <taxon>Pseudomonadati</taxon>
        <taxon>Thermodesulfobacteriota</taxon>
        <taxon>Desulfovibrionia</taxon>
        <taxon>Desulfovibrionales</taxon>
        <taxon>Desulfovibrionaceae</taxon>
        <taxon>Oleidesulfovibrio</taxon>
    </lineage>
</organism>
<sequence>MHSKHPTDTARRCETGTDSSDTAADDYSLAGYRFELPEEQIAQHPPEHRGASRLFVMDRKSGVNTQASFKDIGSFLPEGALLVANNSRVLPARMLGRRPTGGKVEFLLLTPLPLVQPQTGTDGRSCAEAEGLLRASKRVRPGDVMHFDGLDVEVLHTADFGRCAVRMHWKGDLAGLFLRQGHLPLPPYIRRPDGEDDHSRYQTVYSRQDRLGSVAAPTAGLHFTPELTASLQEQGFGWAEVTLYVGYGTFSPVRAEDIRTHTMHREYMEITEQAAQAINDAKRQGRPVVTVGTTSTRVLEGAWAACGEIRPFTGWTDIFIYPGYRFNVADHIITNFHLPESSLLMMISAFAGREKTLQAYSQAVAAGYRFFSYGDAMLIL</sequence>
<gene>
    <name evidence="1" type="primary">queA</name>
    <name type="ordered locus">Dde_0042</name>
</gene>
<keyword id="KW-0963">Cytoplasm</keyword>
<keyword id="KW-0671">Queuosine biosynthesis</keyword>
<keyword id="KW-1185">Reference proteome</keyword>
<keyword id="KW-0949">S-adenosyl-L-methionine</keyword>
<keyword id="KW-0808">Transferase</keyword>